<dbReference type="EC" id="6.1.1.16" evidence="1"/>
<dbReference type="EMBL" id="AE006914">
    <property type="protein sequence ID" value="AAL02649.1"/>
    <property type="molecule type" value="Genomic_DNA"/>
</dbReference>
<dbReference type="PIR" id="G97713">
    <property type="entry name" value="G97713"/>
</dbReference>
<dbReference type="RefSeq" id="WP_010976792.1">
    <property type="nucleotide sequence ID" value="NC_003103.1"/>
</dbReference>
<dbReference type="SMR" id="Q92JF6"/>
<dbReference type="GeneID" id="928083"/>
<dbReference type="KEGG" id="rco:RC0111"/>
<dbReference type="PATRIC" id="fig|272944.4.peg.132"/>
<dbReference type="HOGENOM" id="CLU_013528_0_1_5"/>
<dbReference type="Proteomes" id="UP000000816">
    <property type="component" value="Chromosome"/>
</dbReference>
<dbReference type="GO" id="GO:0005829">
    <property type="term" value="C:cytosol"/>
    <property type="evidence" value="ECO:0007669"/>
    <property type="project" value="TreeGrafter"/>
</dbReference>
<dbReference type="GO" id="GO:0005524">
    <property type="term" value="F:ATP binding"/>
    <property type="evidence" value="ECO:0007669"/>
    <property type="project" value="UniProtKB-UniRule"/>
</dbReference>
<dbReference type="GO" id="GO:0004817">
    <property type="term" value="F:cysteine-tRNA ligase activity"/>
    <property type="evidence" value="ECO:0007669"/>
    <property type="project" value="UniProtKB-UniRule"/>
</dbReference>
<dbReference type="GO" id="GO:0008270">
    <property type="term" value="F:zinc ion binding"/>
    <property type="evidence" value="ECO:0007669"/>
    <property type="project" value="UniProtKB-UniRule"/>
</dbReference>
<dbReference type="GO" id="GO:0006423">
    <property type="term" value="P:cysteinyl-tRNA aminoacylation"/>
    <property type="evidence" value="ECO:0007669"/>
    <property type="project" value="UniProtKB-UniRule"/>
</dbReference>
<dbReference type="CDD" id="cd00672">
    <property type="entry name" value="CysRS_core"/>
    <property type="match status" value="1"/>
</dbReference>
<dbReference type="FunFam" id="3.40.50.620:FF:000068">
    <property type="entry name" value="Cysteine--tRNA ligase"/>
    <property type="match status" value="1"/>
</dbReference>
<dbReference type="Gene3D" id="1.20.120.1910">
    <property type="entry name" value="Cysteine-tRNA ligase, C-terminal anti-codon recognition domain"/>
    <property type="match status" value="1"/>
</dbReference>
<dbReference type="Gene3D" id="3.40.50.620">
    <property type="entry name" value="HUPs"/>
    <property type="match status" value="1"/>
</dbReference>
<dbReference type="HAMAP" id="MF_00041">
    <property type="entry name" value="Cys_tRNA_synth"/>
    <property type="match status" value="1"/>
</dbReference>
<dbReference type="InterPro" id="IPR015803">
    <property type="entry name" value="Cys-tRNA-ligase"/>
</dbReference>
<dbReference type="InterPro" id="IPR015273">
    <property type="entry name" value="Cys-tRNA-synt_Ia_DALR"/>
</dbReference>
<dbReference type="InterPro" id="IPR024909">
    <property type="entry name" value="Cys-tRNA/MSH_ligase"/>
</dbReference>
<dbReference type="InterPro" id="IPR014729">
    <property type="entry name" value="Rossmann-like_a/b/a_fold"/>
</dbReference>
<dbReference type="InterPro" id="IPR032678">
    <property type="entry name" value="tRNA-synt_1_cat_dom"/>
</dbReference>
<dbReference type="InterPro" id="IPR009080">
    <property type="entry name" value="tRNAsynth_Ia_anticodon-bd"/>
</dbReference>
<dbReference type="NCBIfam" id="TIGR00435">
    <property type="entry name" value="cysS"/>
    <property type="match status" value="1"/>
</dbReference>
<dbReference type="PANTHER" id="PTHR10890:SF3">
    <property type="entry name" value="CYSTEINE--TRNA LIGASE, CYTOPLASMIC"/>
    <property type="match status" value="1"/>
</dbReference>
<dbReference type="PANTHER" id="PTHR10890">
    <property type="entry name" value="CYSTEINYL-TRNA SYNTHETASE"/>
    <property type="match status" value="1"/>
</dbReference>
<dbReference type="Pfam" id="PF01406">
    <property type="entry name" value="tRNA-synt_1e"/>
    <property type="match status" value="1"/>
</dbReference>
<dbReference type="PRINTS" id="PR00983">
    <property type="entry name" value="TRNASYNTHCYS"/>
</dbReference>
<dbReference type="SMART" id="SM00840">
    <property type="entry name" value="DALR_2"/>
    <property type="match status" value="1"/>
</dbReference>
<dbReference type="SUPFAM" id="SSF47323">
    <property type="entry name" value="Anticodon-binding domain of a subclass of class I aminoacyl-tRNA synthetases"/>
    <property type="match status" value="1"/>
</dbReference>
<dbReference type="SUPFAM" id="SSF52374">
    <property type="entry name" value="Nucleotidylyl transferase"/>
    <property type="match status" value="1"/>
</dbReference>
<keyword id="KW-0030">Aminoacyl-tRNA synthetase</keyword>
<keyword id="KW-0067">ATP-binding</keyword>
<keyword id="KW-0963">Cytoplasm</keyword>
<keyword id="KW-0436">Ligase</keyword>
<keyword id="KW-0479">Metal-binding</keyword>
<keyword id="KW-0547">Nucleotide-binding</keyword>
<keyword id="KW-0648">Protein biosynthesis</keyword>
<keyword id="KW-0862">Zinc</keyword>
<reference key="1">
    <citation type="journal article" date="2001" name="Science">
        <title>Mechanisms of evolution in Rickettsia conorii and R. prowazekii.</title>
        <authorList>
            <person name="Ogata H."/>
            <person name="Audic S."/>
            <person name="Renesto-Audiffren P."/>
            <person name="Fournier P.-E."/>
            <person name="Barbe V."/>
            <person name="Samson D."/>
            <person name="Roux V."/>
            <person name="Cossart P."/>
            <person name="Weissenbach J."/>
            <person name="Claverie J.-M."/>
            <person name="Raoult D."/>
        </authorList>
    </citation>
    <scope>NUCLEOTIDE SEQUENCE [LARGE SCALE GENOMIC DNA]</scope>
    <source>
        <strain>ATCC VR-613 / Malish 7</strain>
    </source>
</reference>
<feature type="chain" id="PRO_0000159468" description="Cysteine--tRNA ligase">
    <location>
        <begin position="1"/>
        <end position="459"/>
    </location>
</feature>
<feature type="short sequence motif" description="'HIGH' region">
    <location>
        <begin position="33"/>
        <end position="43"/>
    </location>
</feature>
<feature type="short sequence motif" description="'KMSKS' region">
    <location>
        <begin position="274"/>
        <end position="278"/>
    </location>
</feature>
<feature type="binding site" evidence="1">
    <location>
        <position position="31"/>
    </location>
    <ligand>
        <name>Zn(2+)</name>
        <dbReference type="ChEBI" id="CHEBI:29105"/>
    </ligand>
</feature>
<feature type="binding site" evidence="1">
    <location>
        <position position="216"/>
    </location>
    <ligand>
        <name>Zn(2+)</name>
        <dbReference type="ChEBI" id="CHEBI:29105"/>
    </ligand>
</feature>
<feature type="binding site" evidence="1">
    <location>
        <position position="241"/>
    </location>
    <ligand>
        <name>Zn(2+)</name>
        <dbReference type="ChEBI" id="CHEBI:29105"/>
    </ligand>
</feature>
<feature type="binding site" evidence="1">
    <location>
        <position position="245"/>
    </location>
    <ligand>
        <name>Zn(2+)</name>
        <dbReference type="ChEBI" id="CHEBI:29105"/>
    </ligand>
</feature>
<feature type="binding site" evidence="1">
    <location>
        <position position="277"/>
    </location>
    <ligand>
        <name>ATP</name>
        <dbReference type="ChEBI" id="CHEBI:30616"/>
    </ligand>
</feature>
<gene>
    <name evidence="1" type="primary">cysS</name>
    <name type="ordered locus">RC0111</name>
</gene>
<accession>Q92JF6</accession>
<name>SYC_RICCN</name>
<protein>
    <recommendedName>
        <fullName evidence="1">Cysteine--tRNA ligase</fullName>
        <ecNumber evidence="1">6.1.1.16</ecNumber>
    </recommendedName>
    <alternativeName>
        <fullName evidence="1">Cysteinyl-tRNA synthetase</fullName>
        <shortName evidence="1">CysRS</shortName>
    </alternativeName>
</protein>
<proteinExistence type="inferred from homology"/>
<organism>
    <name type="scientific">Rickettsia conorii (strain ATCC VR-613 / Malish 7)</name>
    <dbReference type="NCBI Taxonomy" id="272944"/>
    <lineage>
        <taxon>Bacteria</taxon>
        <taxon>Pseudomonadati</taxon>
        <taxon>Pseudomonadota</taxon>
        <taxon>Alphaproteobacteria</taxon>
        <taxon>Rickettsiales</taxon>
        <taxon>Rickettsiaceae</taxon>
        <taxon>Rickettsieae</taxon>
        <taxon>Rickettsia</taxon>
        <taxon>spotted fever group</taxon>
    </lineage>
</organism>
<comment type="catalytic activity">
    <reaction evidence="1">
        <text>tRNA(Cys) + L-cysteine + ATP = L-cysteinyl-tRNA(Cys) + AMP + diphosphate</text>
        <dbReference type="Rhea" id="RHEA:17773"/>
        <dbReference type="Rhea" id="RHEA-COMP:9661"/>
        <dbReference type="Rhea" id="RHEA-COMP:9679"/>
        <dbReference type="ChEBI" id="CHEBI:30616"/>
        <dbReference type="ChEBI" id="CHEBI:33019"/>
        <dbReference type="ChEBI" id="CHEBI:35235"/>
        <dbReference type="ChEBI" id="CHEBI:78442"/>
        <dbReference type="ChEBI" id="CHEBI:78517"/>
        <dbReference type="ChEBI" id="CHEBI:456215"/>
        <dbReference type="EC" id="6.1.1.16"/>
    </reaction>
</comment>
<comment type="cofactor">
    <cofactor evidence="1">
        <name>Zn(2+)</name>
        <dbReference type="ChEBI" id="CHEBI:29105"/>
    </cofactor>
    <text evidence="1">Binds 1 zinc ion per subunit.</text>
</comment>
<comment type="subunit">
    <text evidence="1">Monomer.</text>
</comment>
<comment type="subcellular location">
    <subcellularLocation>
        <location evidence="1">Cytoplasm</location>
    </subcellularLocation>
</comment>
<comment type="similarity">
    <text evidence="1">Belongs to the class-I aminoacyl-tRNA synthetase family.</text>
</comment>
<sequence length="459" mass="52998">MQIQFHLYNTLSRTKEVFNPQDQANVKMYVCGPTVYYNPHIGNSRSGVVYDLLYRIVIKIFGEKAVKYVRNITDVDDKIIDRAALLGVTIDELTDKVTKEFHKNMAYLGCMLPSIEPKATKHIDVMIAIIERLIAKDHAYIADNHVYFDVLSAPNYTELSNRNLEEMFEGVHVENSKTKKNPQDFVLWKPAKQNESANMNFESPWGLGRPGWHIECSAMSYKYLGENFDIHGGGADLIFPHHTNEIAQSRCAFPSSTYAKYWVHNGFLTVNGEKMSKSLGNFITVRDLMDKQIQGEVVRLFLLSSHYRRPLDYNDKAIEDAKKTLDYWYRAIENINVQKIDLPHDFMQSLLDDMNTPLAVKIINDYAKGVFISKTEEERQLNASAIITCANFIGLMNKTPHEWFNSGVDELYVNELVNKRLEAKKQKNWLLADQIRNQLLEEKIILEDRPDGTTIWRKE</sequence>
<evidence type="ECO:0000255" key="1">
    <source>
        <dbReference type="HAMAP-Rule" id="MF_00041"/>
    </source>
</evidence>